<accession>A5IKY3</accession>
<proteinExistence type="inferred from homology"/>
<protein>
    <recommendedName>
        <fullName evidence="1">MEMO1 family protein Tpet_0837</fullName>
    </recommendedName>
</protein>
<feature type="chain" id="PRO_1000003326" description="MEMO1 family protein Tpet_0837">
    <location>
        <begin position="1"/>
        <end position="277"/>
    </location>
</feature>
<organism>
    <name type="scientific">Thermotoga petrophila (strain ATCC BAA-488 / DSM 13995 / JCM 10881 / RKU-1)</name>
    <dbReference type="NCBI Taxonomy" id="390874"/>
    <lineage>
        <taxon>Bacteria</taxon>
        <taxon>Thermotogati</taxon>
        <taxon>Thermotogota</taxon>
        <taxon>Thermotogae</taxon>
        <taxon>Thermotogales</taxon>
        <taxon>Thermotogaceae</taxon>
        <taxon>Thermotoga</taxon>
    </lineage>
</organism>
<evidence type="ECO:0000255" key="1">
    <source>
        <dbReference type="HAMAP-Rule" id="MF_00055"/>
    </source>
</evidence>
<name>Y837_THEP1</name>
<dbReference type="EMBL" id="CP000702">
    <property type="protein sequence ID" value="ABQ46856.1"/>
    <property type="molecule type" value="Genomic_DNA"/>
</dbReference>
<dbReference type="RefSeq" id="WP_011943423.1">
    <property type="nucleotide sequence ID" value="NC_009486.1"/>
</dbReference>
<dbReference type="SMR" id="A5IKY3"/>
<dbReference type="STRING" id="390874.Tpet_0837"/>
<dbReference type="KEGG" id="tpt:Tpet_0837"/>
<dbReference type="eggNOG" id="COG1355">
    <property type="taxonomic scope" value="Bacteria"/>
</dbReference>
<dbReference type="HOGENOM" id="CLU_038085_2_0_0"/>
<dbReference type="Proteomes" id="UP000006558">
    <property type="component" value="Chromosome"/>
</dbReference>
<dbReference type="CDD" id="cd07361">
    <property type="entry name" value="MEMO_like"/>
    <property type="match status" value="1"/>
</dbReference>
<dbReference type="Gene3D" id="3.40.830.10">
    <property type="entry name" value="LigB-like"/>
    <property type="match status" value="1"/>
</dbReference>
<dbReference type="HAMAP" id="MF_00055">
    <property type="entry name" value="MEMO1"/>
    <property type="match status" value="1"/>
</dbReference>
<dbReference type="InterPro" id="IPR002737">
    <property type="entry name" value="MEMO1_fam"/>
</dbReference>
<dbReference type="NCBIfam" id="TIGR04336">
    <property type="entry name" value="AmmeMemoSam_B"/>
    <property type="match status" value="1"/>
</dbReference>
<dbReference type="PANTHER" id="PTHR11060">
    <property type="entry name" value="PROTEIN MEMO1"/>
    <property type="match status" value="1"/>
</dbReference>
<dbReference type="PANTHER" id="PTHR11060:SF0">
    <property type="entry name" value="PROTEIN MEMO1"/>
    <property type="match status" value="1"/>
</dbReference>
<dbReference type="Pfam" id="PF01875">
    <property type="entry name" value="Memo"/>
    <property type="match status" value="1"/>
</dbReference>
<sequence length="277" mass="30693">MKRKPAVAGLFYPSRRDELVEQIRICFLDKRIGPGELPDPSETKLQSPIGFVSPHAGYIYSGPVAAWGFLEVAKFGEPSVVVIIGPNHTGLGRPVGVWPEGEWETPLGTVPVNQRAAEIILNSSRYAEEDFMSHIREHSIEVQIPFLQFVFGDVSIVPICLMDQSPAVAEDLANALTKLVAEFPSVLIIASTDLNHYEDQRTTLRKDSYIMEAIRNKDPRLLYEYLVKEDISMCGYGGVATLLNMNFKNARILKHATSGDVSGDKLEVVGYLSAILF</sequence>
<reference key="1">
    <citation type="submission" date="2007-05" db="EMBL/GenBank/DDBJ databases">
        <title>Complete sequence of Thermotoga petrophila RKU-1.</title>
        <authorList>
            <consortium name="US DOE Joint Genome Institute"/>
            <person name="Copeland A."/>
            <person name="Lucas S."/>
            <person name="Lapidus A."/>
            <person name="Barry K."/>
            <person name="Glavina del Rio T."/>
            <person name="Dalin E."/>
            <person name="Tice H."/>
            <person name="Pitluck S."/>
            <person name="Sims D."/>
            <person name="Brettin T."/>
            <person name="Bruce D."/>
            <person name="Detter J.C."/>
            <person name="Han C."/>
            <person name="Tapia R."/>
            <person name="Schmutz J."/>
            <person name="Larimer F."/>
            <person name="Land M."/>
            <person name="Hauser L."/>
            <person name="Kyrpides N."/>
            <person name="Mikhailova N."/>
            <person name="Nelson K."/>
            <person name="Gogarten J.P."/>
            <person name="Noll K."/>
            <person name="Richardson P."/>
        </authorList>
    </citation>
    <scope>NUCLEOTIDE SEQUENCE [LARGE SCALE GENOMIC DNA]</scope>
    <source>
        <strain>ATCC BAA-488 / DSM 13995 / JCM 10881 / RKU-1</strain>
    </source>
</reference>
<comment type="similarity">
    <text evidence="1">Belongs to the MEMO1 family.</text>
</comment>
<gene>
    <name type="ordered locus">Tpet_0837</name>
</gene>